<gene>
    <name evidence="1" type="primary">divIB</name>
    <name type="ordered locus">HMPREF9243_1416</name>
</gene>
<sequence>MVDWDKEAQRFRQRRQEAEKQEELASSEGQADEPSDDPGLSQALPQKHLGLEDKQQGLPNEEEAKGEDFAKDQEQKHKKTFNHRKYINWTYLSRSKNKKLQLKSVSWSRLILAAAFLFMIIFSAFWLSPLNRIATIEVSGNNIVPQEQILYGSGLRENMTYLGIESKTGVVDNRLKQLFPSVRSVQLNAKGNRTVEVNVQEFRAIGYVKKQDFYYPVLENHIMLDGAIPYLDQDIPLFTGFEDQELLHLANQLSKLSDDLLAKINEVVNISDDNYPNHIALKMEDGNIVVGFIDSIADRMQYYDQIVSELEGKTGVINMEVGSYFQEKNPLNDPFASPEEKASYQEKVDQAKEKSKEKQAKADKHSSESKLGDKPKPRGEQSGASEEVTSSQRQTSSQSSPRPGTNSSQQSSTVTQTRSSNS</sequence>
<dbReference type="EMBL" id="CP002512">
    <property type="protein sequence ID" value="AEA00430.1"/>
    <property type="molecule type" value="Genomic_DNA"/>
</dbReference>
<dbReference type="RefSeq" id="WP_013668687.1">
    <property type="nucleotide sequence ID" value="NC_015278.1"/>
</dbReference>
<dbReference type="STRING" id="866775.HMPREF9243_1416"/>
<dbReference type="KEGG" id="aur:HMPREF9243_1416"/>
<dbReference type="PATRIC" id="fig|866775.3.peg.1323"/>
<dbReference type="eggNOG" id="COG1589">
    <property type="taxonomic scope" value="Bacteria"/>
</dbReference>
<dbReference type="HOGENOM" id="CLU_649940_0_0_9"/>
<dbReference type="Proteomes" id="UP000008129">
    <property type="component" value="Chromosome"/>
</dbReference>
<dbReference type="GO" id="GO:0032153">
    <property type="term" value="C:cell division site"/>
    <property type="evidence" value="ECO:0007669"/>
    <property type="project" value="UniProtKB-UniRule"/>
</dbReference>
<dbReference type="GO" id="GO:0005886">
    <property type="term" value="C:plasma membrane"/>
    <property type="evidence" value="ECO:0007669"/>
    <property type="project" value="UniProtKB-SubCell"/>
</dbReference>
<dbReference type="GO" id="GO:0043093">
    <property type="term" value="P:FtsZ-dependent cytokinesis"/>
    <property type="evidence" value="ECO:0007669"/>
    <property type="project" value="UniProtKB-UniRule"/>
</dbReference>
<dbReference type="Gene3D" id="3.40.50.10960">
    <property type="match status" value="1"/>
</dbReference>
<dbReference type="HAMAP" id="MF_00912">
    <property type="entry name" value="DivIB"/>
    <property type="match status" value="1"/>
</dbReference>
<dbReference type="InterPro" id="IPR026580">
    <property type="entry name" value="DivIB"/>
</dbReference>
<dbReference type="InterPro" id="IPR050487">
    <property type="entry name" value="FtsQ_DivIB"/>
</dbReference>
<dbReference type="InterPro" id="IPR034746">
    <property type="entry name" value="POTRA"/>
</dbReference>
<dbReference type="InterPro" id="IPR013685">
    <property type="entry name" value="POTRA_FtsQ_type"/>
</dbReference>
<dbReference type="PANTHER" id="PTHR37820">
    <property type="entry name" value="CELL DIVISION PROTEIN DIVIB"/>
    <property type="match status" value="1"/>
</dbReference>
<dbReference type="PANTHER" id="PTHR37820:SF1">
    <property type="entry name" value="CELL DIVISION PROTEIN FTSQ"/>
    <property type="match status" value="1"/>
</dbReference>
<dbReference type="Pfam" id="PF08478">
    <property type="entry name" value="POTRA_1"/>
    <property type="match status" value="1"/>
</dbReference>
<dbReference type="PROSITE" id="PS51779">
    <property type="entry name" value="POTRA"/>
    <property type="match status" value="1"/>
</dbReference>
<keyword id="KW-0131">Cell cycle</keyword>
<keyword id="KW-0132">Cell division</keyword>
<keyword id="KW-1003">Cell membrane</keyword>
<keyword id="KW-0472">Membrane</keyword>
<keyword id="KW-1185">Reference proteome</keyword>
<keyword id="KW-0812">Transmembrane</keyword>
<keyword id="KW-1133">Transmembrane helix</keyword>
<name>DIVIB_AERUA</name>
<comment type="function">
    <text evidence="1">Cell division protein that may be involved in stabilizing or promoting the assembly of the division complex.</text>
</comment>
<comment type="subcellular location">
    <subcellularLocation>
        <location evidence="1">Cell membrane</location>
        <topology evidence="1">Single-pass type II membrane protein</topology>
    </subcellularLocation>
    <text evidence="1">Localizes to the division septum.</text>
</comment>
<comment type="similarity">
    <text evidence="1">Belongs to the FtsQ/DivIB family. DivIB subfamily.</text>
</comment>
<proteinExistence type="inferred from homology"/>
<organism>
    <name type="scientific">Aerococcus urinae (strain CCUG 59500 / ACS-120-V-Col10a)</name>
    <dbReference type="NCBI Taxonomy" id="2976812"/>
    <lineage>
        <taxon>Bacteria</taxon>
        <taxon>Bacillati</taxon>
        <taxon>Bacillota</taxon>
        <taxon>Bacilli</taxon>
        <taxon>Lactobacillales</taxon>
        <taxon>Aerococcaceae</taxon>
        <taxon>Aerococcus</taxon>
        <taxon>Aerococcus incertae sedis</taxon>
    </lineage>
</organism>
<evidence type="ECO:0000255" key="1">
    <source>
        <dbReference type="HAMAP-Rule" id="MF_00912"/>
    </source>
</evidence>
<evidence type="ECO:0000255" key="2">
    <source>
        <dbReference type="PROSITE-ProRule" id="PRU01115"/>
    </source>
</evidence>
<evidence type="ECO:0000256" key="3">
    <source>
        <dbReference type="SAM" id="MobiDB-lite"/>
    </source>
</evidence>
<protein>
    <recommendedName>
        <fullName evidence="1">Cell division protein DivIB</fullName>
    </recommendedName>
</protein>
<accession>F2I5T1</accession>
<feature type="chain" id="PRO_0000414755" description="Cell division protein DivIB">
    <location>
        <begin position="1"/>
        <end position="422"/>
    </location>
</feature>
<feature type="topological domain" description="Cytoplasmic" evidence="1">
    <location>
        <begin position="1"/>
        <end position="109"/>
    </location>
</feature>
<feature type="transmembrane region" description="Helical" evidence="1">
    <location>
        <begin position="110"/>
        <end position="130"/>
    </location>
</feature>
<feature type="topological domain" description="Extracellular" evidence="1">
    <location>
        <begin position="131"/>
        <end position="422"/>
    </location>
</feature>
<feature type="domain" description="POTRA" evidence="2">
    <location>
        <begin position="131"/>
        <end position="202"/>
    </location>
</feature>
<feature type="region of interest" description="Disordered" evidence="3">
    <location>
        <begin position="1"/>
        <end position="77"/>
    </location>
</feature>
<feature type="region of interest" description="Disordered" evidence="3">
    <location>
        <begin position="329"/>
        <end position="422"/>
    </location>
</feature>
<feature type="compositionally biased region" description="Basic and acidic residues" evidence="3">
    <location>
        <begin position="1"/>
        <end position="23"/>
    </location>
</feature>
<feature type="compositionally biased region" description="Basic and acidic residues" evidence="3">
    <location>
        <begin position="62"/>
        <end position="75"/>
    </location>
</feature>
<feature type="compositionally biased region" description="Basic and acidic residues" evidence="3">
    <location>
        <begin position="338"/>
        <end position="379"/>
    </location>
</feature>
<feature type="compositionally biased region" description="Low complexity" evidence="3">
    <location>
        <begin position="389"/>
        <end position="422"/>
    </location>
</feature>
<reference key="1">
    <citation type="submission" date="2011-02" db="EMBL/GenBank/DDBJ databases">
        <title>Complete genome sequence of Aerococcus urinae strain ACS-120-V-Col10a.</title>
        <authorList>
            <person name="Durkin A.S."/>
            <person name="Madupu R."/>
            <person name="Radune D."/>
            <person name="Hostetler J."/>
            <person name="Torralba M."/>
            <person name="Gillis M."/>
            <person name="Methe B."/>
            <person name="Sutton G."/>
            <person name="Nelson K.E."/>
        </authorList>
    </citation>
    <scope>NUCLEOTIDE SEQUENCE [LARGE SCALE GENOMIC DNA]</scope>
    <source>
        <strain>CCUG 59500 / ACS-120-V-Col10a</strain>
    </source>
</reference>